<keyword id="KW-0030">Aminoacyl-tRNA synthetase</keyword>
<keyword id="KW-0067">ATP-binding</keyword>
<keyword id="KW-0963">Cytoplasm</keyword>
<keyword id="KW-0436">Ligase</keyword>
<keyword id="KW-0479">Metal-binding</keyword>
<keyword id="KW-0547">Nucleotide-binding</keyword>
<keyword id="KW-0648">Protein biosynthesis</keyword>
<keyword id="KW-0694">RNA-binding</keyword>
<keyword id="KW-0820">tRNA-binding</keyword>
<keyword id="KW-0862">Zinc</keyword>
<organism>
    <name type="scientific">Picrophilus torridus (strain ATCC 700027 / DSM 9790 / JCM 10055 / NBRC 100828 / KAW 2/3)</name>
    <dbReference type="NCBI Taxonomy" id="1122961"/>
    <lineage>
        <taxon>Archaea</taxon>
        <taxon>Methanobacteriati</taxon>
        <taxon>Thermoplasmatota</taxon>
        <taxon>Thermoplasmata</taxon>
        <taxon>Thermoplasmatales</taxon>
        <taxon>Picrophilaceae</taxon>
        <taxon>Picrophilus</taxon>
    </lineage>
</organism>
<dbReference type="EC" id="6.1.1.10" evidence="1"/>
<dbReference type="EMBL" id="AE017261">
    <property type="protein sequence ID" value="AAT43127.1"/>
    <property type="molecule type" value="Genomic_DNA"/>
</dbReference>
<dbReference type="RefSeq" id="WP_011177343.1">
    <property type="nucleotide sequence ID" value="NC_005877.1"/>
</dbReference>
<dbReference type="SMR" id="Q6L1M5"/>
<dbReference type="FunCoup" id="Q6L1M5">
    <property type="interactions" value="270"/>
</dbReference>
<dbReference type="STRING" id="263820.PTO0542"/>
<dbReference type="PaxDb" id="263820-PTO0542"/>
<dbReference type="GeneID" id="2844159"/>
<dbReference type="KEGG" id="pto:PTO0542"/>
<dbReference type="PATRIC" id="fig|263820.9.peg.570"/>
<dbReference type="eggNOG" id="arCOG00810">
    <property type="taxonomic scope" value="Archaea"/>
</dbReference>
<dbReference type="HOGENOM" id="CLU_009710_1_2_2"/>
<dbReference type="InParanoid" id="Q6L1M5"/>
<dbReference type="OrthoDB" id="371856at2157"/>
<dbReference type="Proteomes" id="UP000000438">
    <property type="component" value="Chromosome"/>
</dbReference>
<dbReference type="GO" id="GO:0005829">
    <property type="term" value="C:cytosol"/>
    <property type="evidence" value="ECO:0007669"/>
    <property type="project" value="TreeGrafter"/>
</dbReference>
<dbReference type="GO" id="GO:0005524">
    <property type="term" value="F:ATP binding"/>
    <property type="evidence" value="ECO:0007669"/>
    <property type="project" value="UniProtKB-UniRule"/>
</dbReference>
<dbReference type="GO" id="GO:0046872">
    <property type="term" value="F:metal ion binding"/>
    <property type="evidence" value="ECO:0007669"/>
    <property type="project" value="UniProtKB-KW"/>
</dbReference>
<dbReference type="GO" id="GO:0004825">
    <property type="term" value="F:methionine-tRNA ligase activity"/>
    <property type="evidence" value="ECO:0007669"/>
    <property type="project" value="UniProtKB-UniRule"/>
</dbReference>
<dbReference type="GO" id="GO:0000049">
    <property type="term" value="F:tRNA binding"/>
    <property type="evidence" value="ECO:0007669"/>
    <property type="project" value="UniProtKB-KW"/>
</dbReference>
<dbReference type="GO" id="GO:0006431">
    <property type="term" value="P:methionyl-tRNA aminoacylation"/>
    <property type="evidence" value="ECO:0007669"/>
    <property type="project" value="UniProtKB-UniRule"/>
</dbReference>
<dbReference type="CDD" id="cd00814">
    <property type="entry name" value="MetRS_core"/>
    <property type="match status" value="1"/>
</dbReference>
<dbReference type="CDD" id="cd02153">
    <property type="entry name" value="tRNA_bindingDomain"/>
    <property type="match status" value="1"/>
</dbReference>
<dbReference type="FunFam" id="2.20.28.20:FF:000001">
    <property type="entry name" value="Methionine--tRNA ligase"/>
    <property type="match status" value="1"/>
</dbReference>
<dbReference type="Gene3D" id="3.40.50.620">
    <property type="entry name" value="HUPs"/>
    <property type="match status" value="1"/>
</dbReference>
<dbReference type="Gene3D" id="1.10.730.10">
    <property type="entry name" value="Isoleucyl-tRNA Synthetase, Domain 1"/>
    <property type="match status" value="1"/>
</dbReference>
<dbReference type="Gene3D" id="2.20.28.20">
    <property type="entry name" value="Methionyl-tRNA synthetase, Zn-domain"/>
    <property type="match status" value="1"/>
</dbReference>
<dbReference type="Gene3D" id="2.40.50.140">
    <property type="entry name" value="Nucleic acid-binding proteins"/>
    <property type="match status" value="1"/>
</dbReference>
<dbReference type="HAMAP" id="MF_00098">
    <property type="entry name" value="Met_tRNA_synth_type1"/>
    <property type="match status" value="1"/>
</dbReference>
<dbReference type="InterPro" id="IPR001412">
    <property type="entry name" value="aa-tRNA-synth_I_CS"/>
</dbReference>
<dbReference type="InterPro" id="IPR023458">
    <property type="entry name" value="Met-tRNA_ligase_1"/>
</dbReference>
<dbReference type="InterPro" id="IPR014758">
    <property type="entry name" value="Met-tRNA_synth"/>
</dbReference>
<dbReference type="InterPro" id="IPR015413">
    <property type="entry name" value="Methionyl/Leucyl_tRNA_Synth"/>
</dbReference>
<dbReference type="InterPro" id="IPR033911">
    <property type="entry name" value="MetRS_core"/>
</dbReference>
<dbReference type="InterPro" id="IPR029038">
    <property type="entry name" value="MetRS_Zn"/>
</dbReference>
<dbReference type="InterPro" id="IPR012340">
    <property type="entry name" value="NA-bd_OB-fold"/>
</dbReference>
<dbReference type="InterPro" id="IPR014729">
    <property type="entry name" value="Rossmann-like_a/b/a_fold"/>
</dbReference>
<dbReference type="InterPro" id="IPR002547">
    <property type="entry name" value="tRNA-bd_dom"/>
</dbReference>
<dbReference type="InterPro" id="IPR009080">
    <property type="entry name" value="tRNAsynth_Ia_anticodon-bd"/>
</dbReference>
<dbReference type="NCBIfam" id="TIGR00398">
    <property type="entry name" value="metG"/>
    <property type="match status" value="1"/>
</dbReference>
<dbReference type="PANTHER" id="PTHR45765">
    <property type="entry name" value="METHIONINE--TRNA LIGASE"/>
    <property type="match status" value="1"/>
</dbReference>
<dbReference type="PANTHER" id="PTHR45765:SF1">
    <property type="entry name" value="METHIONINE--TRNA LIGASE, CYTOPLASMIC"/>
    <property type="match status" value="1"/>
</dbReference>
<dbReference type="Pfam" id="PF09334">
    <property type="entry name" value="tRNA-synt_1g"/>
    <property type="match status" value="1"/>
</dbReference>
<dbReference type="Pfam" id="PF01588">
    <property type="entry name" value="tRNA_bind"/>
    <property type="match status" value="1"/>
</dbReference>
<dbReference type="PRINTS" id="PR01041">
    <property type="entry name" value="TRNASYNTHMET"/>
</dbReference>
<dbReference type="SUPFAM" id="SSF47323">
    <property type="entry name" value="Anticodon-binding domain of a subclass of class I aminoacyl-tRNA synthetases"/>
    <property type="match status" value="1"/>
</dbReference>
<dbReference type="SUPFAM" id="SSF57770">
    <property type="entry name" value="Methionyl-tRNA synthetase (MetRS), Zn-domain"/>
    <property type="match status" value="1"/>
</dbReference>
<dbReference type="SUPFAM" id="SSF50249">
    <property type="entry name" value="Nucleic acid-binding proteins"/>
    <property type="match status" value="1"/>
</dbReference>
<dbReference type="SUPFAM" id="SSF52374">
    <property type="entry name" value="Nucleotidylyl transferase"/>
    <property type="match status" value="1"/>
</dbReference>
<dbReference type="PROSITE" id="PS00178">
    <property type="entry name" value="AA_TRNA_LIGASE_I"/>
    <property type="match status" value="1"/>
</dbReference>
<dbReference type="PROSITE" id="PS50886">
    <property type="entry name" value="TRBD"/>
    <property type="match status" value="1"/>
</dbReference>
<protein>
    <recommendedName>
        <fullName evidence="1">Methionine--tRNA ligase</fullName>
        <ecNumber evidence="1">6.1.1.10</ecNumber>
    </recommendedName>
    <alternativeName>
        <fullName evidence="1">Methionyl-tRNA synthetase</fullName>
        <shortName evidence="1">MetRS</shortName>
    </alternativeName>
</protein>
<gene>
    <name evidence="1" type="primary">metG</name>
    <name type="ordered locus">PTO0542</name>
</gene>
<evidence type="ECO:0000255" key="1">
    <source>
        <dbReference type="HAMAP-Rule" id="MF_00098"/>
    </source>
</evidence>
<proteinExistence type="inferred from homology"/>
<sequence length="690" mass="79478">MSERILVNCALPYANGPLHLGHIAGAYLAADIFVRFNRLNGNEVLFVSGSDEYGTPITITAEKNKTSPQNVADIYHREHEQTFKNLDIVFDIFTRTTDPEHVKDVDEFFINLLNKNYLEKRYMVSPYCKSTGKFMPDRYIHGTCPYCGFNDARGDQCDECGRTLDPIELINPRCTSSNEEPLFIATEHFFLRLDLLSDELLNYLNTRENWKPNVINFTRSIINEGLRPRPITRDIDWGVPIPLNGFEGKRIYVWFEALIGYITGARVYSKNIKDDDYWKKFWLDKNVKSYYFIGKDNIPFHTIIWPAMLIAHGDYNLPYNVPANEYLRFEGAQFSKSRGIGYTVNEALSLVNKNYLRYYMASIMPETGDSSFSLNELVSRVNSELIDKYGNFIYRVLGFISNRKINIKKCEPDSIINEFKRFFDEYSESIKNIKIKNGLQIWLEAVTLANNYFNSEAPWNINDHERLNQVLFTSLKISMYLTAMLYPYVPSASSEILSSLGFKTVNYKFDDMLGFDDFRPLKGEPPFKKLEIADKKINIDLMVGTVKYVNDHPNADNLYVLGVHADRDITIVSNIKKYLTPENLQGRRILLIRNVKPATIRGIKSEAIIIAVQHGERIIIPEVNADDGSRMKIDGFDFNGDIISMDEIKRYKFIVDKNELVLEYNNSRFIITENGKPLKINAPDGSSIVL</sequence>
<accession>Q6L1M5</accession>
<comment type="function">
    <text evidence="1">Is required not only for elongation of protein synthesis but also for the initiation of all mRNA translation through initiator tRNA(fMet) aminoacylation.</text>
</comment>
<comment type="catalytic activity">
    <reaction evidence="1">
        <text>tRNA(Met) + L-methionine + ATP = L-methionyl-tRNA(Met) + AMP + diphosphate</text>
        <dbReference type="Rhea" id="RHEA:13481"/>
        <dbReference type="Rhea" id="RHEA-COMP:9667"/>
        <dbReference type="Rhea" id="RHEA-COMP:9698"/>
        <dbReference type="ChEBI" id="CHEBI:30616"/>
        <dbReference type="ChEBI" id="CHEBI:33019"/>
        <dbReference type="ChEBI" id="CHEBI:57844"/>
        <dbReference type="ChEBI" id="CHEBI:78442"/>
        <dbReference type="ChEBI" id="CHEBI:78530"/>
        <dbReference type="ChEBI" id="CHEBI:456215"/>
        <dbReference type="EC" id="6.1.1.10"/>
    </reaction>
</comment>
<comment type="cofactor">
    <cofactor evidence="1">
        <name>Zn(2+)</name>
        <dbReference type="ChEBI" id="CHEBI:29105"/>
    </cofactor>
    <text evidence="1">Binds 1 zinc ion per subunit.</text>
</comment>
<comment type="subunit">
    <text evidence="1">Homodimer.</text>
</comment>
<comment type="subcellular location">
    <subcellularLocation>
        <location evidence="1">Cytoplasm</location>
    </subcellularLocation>
</comment>
<comment type="similarity">
    <text evidence="1">Belongs to the class-I aminoacyl-tRNA synthetase family. MetG type 1 subfamily.</text>
</comment>
<reference key="1">
    <citation type="journal article" date="2004" name="Proc. Natl. Acad. Sci. U.S.A.">
        <title>Genome sequence of Picrophilus torridus and its implications for life around pH 0.</title>
        <authorList>
            <person name="Fuetterer O."/>
            <person name="Angelov A."/>
            <person name="Liesegang H."/>
            <person name="Gottschalk G."/>
            <person name="Schleper C."/>
            <person name="Schepers B."/>
            <person name="Dock C."/>
            <person name="Antranikian G."/>
            <person name="Liebl W."/>
        </authorList>
    </citation>
    <scope>NUCLEOTIDE SEQUENCE [LARGE SCALE GENOMIC DNA]</scope>
    <source>
        <strain>ATCC 700027 / DSM 9790 / JCM 10055 / NBRC 100828 / KAW 2/3</strain>
    </source>
</reference>
<feature type="chain" id="PRO_0000139193" description="Methionine--tRNA ligase">
    <location>
        <begin position="1"/>
        <end position="690"/>
    </location>
</feature>
<feature type="domain" description="tRNA-binding" evidence="1">
    <location>
        <begin position="535"/>
        <end position="632"/>
    </location>
</feature>
<feature type="short sequence motif" description="'HIGH' region">
    <location>
        <begin position="12"/>
        <end position="22"/>
    </location>
</feature>
<feature type="short sequence motif" description="'KMSKS' region">
    <location>
        <begin position="333"/>
        <end position="337"/>
    </location>
</feature>
<feature type="binding site" evidence="1">
    <location>
        <position position="144"/>
    </location>
    <ligand>
        <name>Zn(2+)</name>
        <dbReference type="ChEBI" id="CHEBI:29105"/>
    </ligand>
</feature>
<feature type="binding site" evidence="1">
    <location>
        <position position="147"/>
    </location>
    <ligand>
        <name>Zn(2+)</name>
        <dbReference type="ChEBI" id="CHEBI:29105"/>
    </ligand>
</feature>
<feature type="binding site" evidence="1">
    <location>
        <position position="157"/>
    </location>
    <ligand>
        <name>Zn(2+)</name>
        <dbReference type="ChEBI" id="CHEBI:29105"/>
    </ligand>
</feature>
<feature type="binding site" evidence="1">
    <location>
        <position position="160"/>
    </location>
    <ligand>
        <name>Zn(2+)</name>
        <dbReference type="ChEBI" id="CHEBI:29105"/>
    </ligand>
</feature>
<feature type="binding site" evidence="1">
    <location>
        <position position="336"/>
    </location>
    <ligand>
        <name>ATP</name>
        <dbReference type="ChEBI" id="CHEBI:30616"/>
    </ligand>
</feature>
<name>SYM_PICTO</name>